<accession>Q2SWF8</accession>
<protein>
    <recommendedName>
        <fullName evidence="1">Nucleoid-associated protein BTH_I2220</fullName>
    </recommendedName>
</protein>
<name>Y2220_BURTA</name>
<gene>
    <name type="ordered locus">BTH_I2220</name>
</gene>
<evidence type="ECO:0000255" key="1">
    <source>
        <dbReference type="HAMAP-Rule" id="MF_00274"/>
    </source>
</evidence>
<sequence>MMKGQLAGLMKQAQQMQENMKKMQEQLALIEVEGQSGAGLVKVTMTCRNEVRRVSIDPSLLADDKDMLEDLVAAAFNDAVRKAEVTSQEKMSGMTAGLPLPPGFKLPF</sequence>
<reference key="1">
    <citation type="journal article" date="2005" name="BMC Genomics">
        <title>Bacterial genome adaptation to niches: divergence of the potential virulence genes in three Burkholderia species of different survival strategies.</title>
        <authorList>
            <person name="Kim H.S."/>
            <person name="Schell M.A."/>
            <person name="Yu Y."/>
            <person name="Ulrich R.L."/>
            <person name="Sarria S.H."/>
            <person name="Nierman W.C."/>
            <person name="DeShazer D."/>
        </authorList>
    </citation>
    <scope>NUCLEOTIDE SEQUENCE [LARGE SCALE GENOMIC DNA]</scope>
    <source>
        <strain>ATCC 700388 / DSM 13276 / CCUG 48851 / CIP 106301 / E264</strain>
    </source>
</reference>
<organism>
    <name type="scientific">Burkholderia thailandensis (strain ATCC 700388 / DSM 13276 / CCUG 48851 / CIP 106301 / E264)</name>
    <dbReference type="NCBI Taxonomy" id="271848"/>
    <lineage>
        <taxon>Bacteria</taxon>
        <taxon>Pseudomonadati</taxon>
        <taxon>Pseudomonadota</taxon>
        <taxon>Betaproteobacteria</taxon>
        <taxon>Burkholderiales</taxon>
        <taxon>Burkholderiaceae</taxon>
        <taxon>Burkholderia</taxon>
        <taxon>pseudomallei group</taxon>
    </lineage>
</organism>
<dbReference type="EMBL" id="CP000086">
    <property type="protein sequence ID" value="ABC37324.1"/>
    <property type="molecule type" value="Genomic_DNA"/>
</dbReference>
<dbReference type="RefSeq" id="WP_009890790.1">
    <property type="nucleotide sequence ID" value="NZ_CP008785.1"/>
</dbReference>
<dbReference type="SMR" id="Q2SWF8"/>
<dbReference type="GeneID" id="45121938"/>
<dbReference type="KEGG" id="bte:BTH_I2220"/>
<dbReference type="HOGENOM" id="CLU_140930_0_0_4"/>
<dbReference type="Proteomes" id="UP000001930">
    <property type="component" value="Chromosome I"/>
</dbReference>
<dbReference type="GO" id="GO:0043590">
    <property type="term" value="C:bacterial nucleoid"/>
    <property type="evidence" value="ECO:0007669"/>
    <property type="project" value="UniProtKB-UniRule"/>
</dbReference>
<dbReference type="GO" id="GO:0005829">
    <property type="term" value="C:cytosol"/>
    <property type="evidence" value="ECO:0007669"/>
    <property type="project" value="TreeGrafter"/>
</dbReference>
<dbReference type="GO" id="GO:0003677">
    <property type="term" value="F:DNA binding"/>
    <property type="evidence" value="ECO:0007669"/>
    <property type="project" value="UniProtKB-UniRule"/>
</dbReference>
<dbReference type="FunFam" id="3.30.1310.10:FF:000001">
    <property type="entry name" value="Nucleoid-associated protein YbaB"/>
    <property type="match status" value="1"/>
</dbReference>
<dbReference type="Gene3D" id="3.30.1310.10">
    <property type="entry name" value="Nucleoid-associated protein YbaB-like domain"/>
    <property type="match status" value="1"/>
</dbReference>
<dbReference type="HAMAP" id="MF_00274">
    <property type="entry name" value="DNA_YbaB_EbfC"/>
    <property type="match status" value="1"/>
</dbReference>
<dbReference type="InterPro" id="IPR036894">
    <property type="entry name" value="YbaB-like_sf"/>
</dbReference>
<dbReference type="InterPro" id="IPR004401">
    <property type="entry name" value="YbaB/EbfC"/>
</dbReference>
<dbReference type="NCBIfam" id="TIGR00103">
    <property type="entry name" value="DNA_YbaB_EbfC"/>
    <property type="match status" value="1"/>
</dbReference>
<dbReference type="PANTHER" id="PTHR33449">
    <property type="entry name" value="NUCLEOID-ASSOCIATED PROTEIN YBAB"/>
    <property type="match status" value="1"/>
</dbReference>
<dbReference type="PANTHER" id="PTHR33449:SF1">
    <property type="entry name" value="NUCLEOID-ASSOCIATED PROTEIN YBAB"/>
    <property type="match status" value="1"/>
</dbReference>
<dbReference type="Pfam" id="PF02575">
    <property type="entry name" value="YbaB_DNA_bd"/>
    <property type="match status" value="1"/>
</dbReference>
<dbReference type="PIRSF" id="PIRSF004555">
    <property type="entry name" value="UCP004555"/>
    <property type="match status" value="1"/>
</dbReference>
<dbReference type="SUPFAM" id="SSF82607">
    <property type="entry name" value="YbaB-like"/>
    <property type="match status" value="1"/>
</dbReference>
<keyword id="KW-0963">Cytoplasm</keyword>
<keyword id="KW-0238">DNA-binding</keyword>
<feature type="chain" id="PRO_1000003711" description="Nucleoid-associated protein BTH_I2220">
    <location>
        <begin position="1"/>
        <end position="108"/>
    </location>
</feature>
<proteinExistence type="inferred from homology"/>
<comment type="function">
    <text evidence="1">Binds to DNA and alters its conformation. May be involved in regulation of gene expression, nucleoid organization and DNA protection.</text>
</comment>
<comment type="subunit">
    <text evidence="1">Homodimer.</text>
</comment>
<comment type="subcellular location">
    <subcellularLocation>
        <location evidence="1">Cytoplasm</location>
        <location evidence="1">Nucleoid</location>
    </subcellularLocation>
</comment>
<comment type="similarity">
    <text evidence="1">Belongs to the YbaB/EbfC family.</text>
</comment>